<protein>
    <recommendedName>
        <fullName evidence="1">Large ribosomal subunit protein bL34</fullName>
    </recommendedName>
    <alternativeName>
        <fullName evidence="2">50S ribosomal protein L34</fullName>
    </alternativeName>
</protein>
<keyword id="KW-0687">Ribonucleoprotein</keyword>
<keyword id="KW-0689">Ribosomal protein</keyword>
<name>RL34_SALSV</name>
<dbReference type="EMBL" id="CP001127">
    <property type="protein sequence ID" value="ACF90488.1"/>
    <property type="molecule type" value="Genomic_DNA"/>
</dbReference>
<dbReference type="RefSeq" id="WP_000831330.1">
    <property type="nucleotide sequence ID" value="NC_011094.1"/>
</dbReference>
<dbReference type="SMR" id="B4TN08"/>
<dbReference type="GeneID" id="98190980"/>
<dbReference type="KEGG" id="sew:SeSA_A4052"/>
<dbReference type="HOGENOM" id="CLU_129938_2_1_6"/>
<dbReference type="Proteomes" id="UP000001865">
    <property type="component" value="Chromosome"/>
</dbReference>
<dbReference type="GO" id="GO:1990904">
    <property type="term" value="C:ribonucleoprotein complex"/>
    <property type="evidence" value="ECO:0007669"/>
    <property type="project" value="UniProtKB-KW"/>
</dbReference>
<dbReference type="GO" id="GO:0005840">
    <property type="term" value="C:ribosome"/>
    <property type="evidence" value="ECO:0007669"/>
    <property type="project" value="UniProtKB-KW"/>
</dbReference>
<dbReference type="GO" id="GO:0003735">
    <property type="term" value="F:structural constituent of ribosome"/>
    <property type="evidence" value="ECO:0007669"/>
    <property type="project" value="InterPro"/>
</dbReference>
<dbReference type="GO" id="GO:0006412">
    <property type="term" value="P:translation"/>
    <property type="evidence" value="ECO:0007669"/>
    <property type="project" value="UniProtKB-UniRule"/>
</dbReference>
<dbReference type="FunFam" id="1.10.287.3980:FF:000001">
    <property type="entry name" value="Mitochondrial ribosomal protein L34"/>
    <property type="match status" value="1"/>
</dbReference>
<dbReference type="Gene3D" id="1.10.287.3980">
    <property type="match status" value="1"/>
</dbReference>
<dbReference type="HAMAP" id="MF_00391">
    <property type="entry name" value="Ribosomal_bL34"/>
    <property type="match status" value="1"/>
</dbReference>
<dbReference type="InterPro" id="IPR000271">
    <property type="entry name" value="Ribosomal_bL34"/>
</dbReference>
<dbReference type="InterPro" id="IPR020939">
    <property type="entry name" value="Ribosomal_bL34_CS"/>
</dbReference>
<dbReference type="NCBIfam" id="TIGR01030">
    <property type="entry name" value="rpmH_bact"/>
    <property type="match status" value="1"/>
</dbReference>
<dbReference type="PANTHER" id="PTHR14503:SF4">
    <property type="entry name" value="LARGE RIBOSOMAL SUBUNIT PROTEIN BL34M"/>
    <property type="match status" value="1"/>
</dbReference>
<dbReference type="PANTHER" id="PTHR14503">
    <property type="entry name" value="MITOCHONDRIAL RIBOSOMAL PROTEIN 34 FAMILY MEMBER"/>
    <property type="match status" value="1"/>
</dbReference>
<dbReference type="Pfam" id="PF00468">
    <property type="entry name" value="Ribosomal_L34"/>
    <property type="match status" value="1"/>
</dbReference>
<dbReference type="PROSITE" id="PS00784">
    <property type="entry name" value="RIBOSOMAL_L34"/>
    <property type="match status" value="1"/>
</dbReference>
<evidence type="ECO:0000255" key="1">
    <source>
        <dbReference type="HAMAP-Rule" id="MF_00391"/>
    </source>
</evidence>
<evidence type="ECO:0000305" key="2"/>
<sequence length="46" mass="5380">MKRTFQPSVLKRNRSHGFRARMATKNGRQVLARRRAKGRARLTVSK</sequence>
<accession>B4TN08</accession>
<organism>
    <name type="scientific">Salmonella schwarzengrund (strain CVM19633)</name>
    <dbReference type="NCBI Taxonomy" id="439843"/>
    <lineage>
        <taxon>Bacteria</taxon>
        <taxon>Pseudomonadati</taxon>
        <taxon>Pseudomonadota</taxon>
        <taxon>Gammaproteobacteria</taxon>
        <taxon>Enterobacterales</taxon>
        <taxon>Enterobacteriaceae</taxon>
        <taxon>Salmonella</taxon>
    </lineage>
</organism>
<reference key="1">
    <citation type="journal article" date="2011" name="J. Bacteriol.">
        <title>Comparative genomics of 28 Salmonella enterica isolates: evidence for CRISPR-mediated adaptive sublineage evolution.</title>
        <authorList>
            <person name="Fricke W.F."/>
            <person name="Mammel M.K."/>
            <person name="McDermott P.F."/>
            <person name="Tartera C."/>
            <person name="White D.G."/>
            <person name="Leclerc J.E."/>
            <person name="Ravel J."/>
            <person name="Cebula T.A."/>
        </authorList>
    </citation>
    <scope>NUCLEOTIDE SEQUENCE [LARGE SCALE GENOMIC DNA]</scope>
    <source>
        <strain>CVM19633</strain>
    </source>
</reference>
<comment type="similarity">
    <text evidence="1">Belongs to the bacterial ribosomal protein bL34 family.</text>
</comment>
<feature type="chain" id="PRO_1000196107" description="Large ribosomal subunit protein bL34">
    <location>
        <begin position="1"/>
        <end position="46"/>
    </location>
</feature>
<gene>
    <name evidence="1" type="primary">rpmH</name>
    <name type="ordered locus">SeSA_A4052</name>
</gene>
<proteinExistence type="inferred from homology"/>